<sequence length="180" mass="21038">MFPMVTGFMSYGQQTIRATRYIGQSFITTLSHTNRLPITIHYPYEKSITPERFRGRIHFEFDKCIACEVCVRVCPIDLPVVDWRFEKDIKRKQLLNYSIDFGVCIFCGNCVEYCPTSCLSMTEEYELSTYDRHELNYNQIALSRLPISIMGDYTIQTIRNSSESKINKEKSSNSRTITDY</sequence>
<name>NDHI_WHEAT</name>
<comment type="function">
    <text evidence="1">NDH shuttles electrons from NAD(P)H:plastoquinone, via FMN and iron-sulfur (Fe-S) centers, to quinones in the photosynthetic chain and possibly in a chloroplast respiratory chain. The immediate electron acceptor for the enzyme in this species is believed to be plastoquinone. Couples the redox reaction to proton translocation, and thus conserves the redox energy in a proton gradient.</text>
</comment>
<comment type="catalytic activity">
    <reaction evidence="1">
        <text>a plastoquinone + NADH + (n+1) H(+)(in) = a plastoquinol + NAD(+) + n H(+)(out)</text>
        <dbReference type="Rhea" id="RHEA:42608"/>
        <dbReference type="Rhea" id="RHEA-COMP:9561"/>
        <dbReference type="Rhea" id="RHEA-COMP:9562"/>
        <dbReference type="ChEBI" id="CHEBI:15378"/>
        <dbReference type="ChEBI" id="CHEBI:17757"/>
        <dbReference type="ChEBI" id="CHEBI:57540"/>
        <dbReference type="ChEBI" id="CHEBI:57945"/>
        <dbReference type="ChEBI" id="CHEBI:62192"/>
    </reaction>
</comment>
<comment type="catalytic activity">
    <reaction evidence="1">
        <text>a plastoquinone + NADPH + (n+1) H(+)(in) = a plastoquinol + NADP(+) + n H(+)(out)</text>
        <dbReference type="Rhea" id="RHEA:42612"/>
        <dbReference type="Rhea" id="RHEA-COMP:9561"/>
        <dbReference type="Rhea" id="RHEA-COMP:9562"/>
        <dbReference type="ChEBI" id="CHEBI:15378"/>
        <dbReference type="ChEBI" id="CHEBI:17757"/>
        <dbReference type="ChEBI" id="CHEBI:57783"/>
        <dbReference type="ChEBI" id="CHEBI:58349"/>
        <dbReference type="ChEBI" id="CHEBI:62192"/>
    </reaction>
</comment>
<comment type="cofactor">
    <cofactor evidence="1">
        <name>[4Fe-4S] cluster</name>
        <dbReference type="ChEBI" id="CHEBI:49883"/>
    </cofactor>
    <text evidence="1">Binds 2 [4Fe-4S] clusters per subunit.</text>
</comment>
<comment type="subunit">
    <text evidence="1">NDH is composed of at least 16 different subunits, 5 of which are encoded in the nucleus.</text>
</comment>
<comment type="subcellular location">
    <subcellularLocation>
        <location evidence="1">Plastid</location>
        <location evidence="1">Chloroplast thylakoid membrane</location>
        <topology evidence="1">Peripheral membrane protein</topology>
    </subcellularLocation>
</comment>
<comment type="similarity">
    <text evidence="1">Belongs to the complex I 23 kDa subunit family.</text>
</comment>
<comment type="sequence caution" evidence="2">
    <conflict type="erroneous initiation">
        <sequence resource="EMBL-CDS" id="CAA29900"/>
    </conflict>
</comment>
<geneLocation type="chloroplast"/>
<feature type="chain" id="PRO_0000118714" description="NAD(P)H-quinone oxidoreductase subunit I, chloroplastic">
    <location>
        <begin position="1"/>
        <end position="180"/>
    </location>
</feature>
<feature type="domain" description="4Fe-4S ferredoxin-type 1" evidence="1">
    <location>
        <begin position="55"/>
        <end position="84"/>
    </location>
</feature>
<feature type="domain" description="4Fe-4S ferredoxin-type 2" evidence="1">
    <location>
        <begin position="95"/>
        <end position="124"/>
    </location>
</feature>
<feature type="binding site" evidence="1">
    <location>
        <position position="64"/>
    </location>
    <ligand>
        <name>[4Fe-4S] cluster</name>
        <dbReference type="ChEBI" id="CHEBI:49883"/>
        <label>1</label>
    </ligand>
</feature>
<feature type="binding site" evidence="1">
    <location>
        <position position="67"/>
    </location>
    <ligand>
        <name>[4Fe-4S] cluster</name>
        <dbReference type="ChEBI" id="CHEBI:49883"/>
        <label>1</label>
    </ligand>
</feature>
<feature type="binding site" evidence="1">
    <location>
        <position position="70"/>
    </location>
    <ligand>
        <name>[4Fe-4S] cluster</name>
        <dbReference type="ChEBI" id="CHEBI:49883"/>
        <label>1</label>
    </ligand>
</feature>
<feature type="binding site" evidence="1">
    <location>
        <position position="74"/>
    </location>
    <ligand>
        <name>[4Fe-4S] cluster</name>
        <dbReference type="ChEBI" id="CHEBI:49883"/>
        <label>2</label>
    </ligand>
</feature>
<feature type="binding site" evidence="1">
    <location>
        <position position="104"/>
    </location>
    <ligand>
        <name>[4Fe-4S] cluster</name>
        <dbReference type="ChEBI" id="CHEBI:49883"/>
        <label>2</label>
    </ligand>
</feature>
<feature type="binding site" evidence="1">
    <location>
        <position position="107"/>
    </location>
    <ligand>
        <name>[4Fe-4S] cluster</name>
        <dbReference type="ChEBI" id="CHEBI:49883"/>
        <label>2</label>
    </ligand>
</feature>
<feature type="binding site" evidence="1">
    <location>
        <position position="110"/>
    </location>
    <ligand>
        <name>[4Fe-4S] cluster</name>
        <dbReference type="ChEBI" id="CHEBI:49883"/>
        <label>2</label>
    </ligand>
</feature>
<feature type="binding site" evidence="1">
    <location>
        <position position="114"/>
    </location>
    <ligand>
        <name>[4Fe-4S] cluster</name>
        <dbReference type="ChEBI" id="CHEBI:49883"/>
        <label>1</label>
    </ligand>
</feature>
<feature type="sequence conflict" description="In Ref. 1; CAA29900." evidence="2" ref="1">
    <original>R</original>
    <variation>G</variation>
    <location>
        <position position="72"/>
    </location>
</feature>
<feature type="sequence conflict" description="In Ref. 1; CAA29900." evidence="2" ref="1">
    <original>R</original>
    <variation>K</variation>
    <location>
        <position position="91"/>
    </location>
</feature>
<protein>
    <recommendedName>
        <fullName evidence="1">NAD(P)H-quinone oxidoreductase subunit I, chloroplastic</fullName>
        <ecNumber evidence="1">7.1.1.-</ecNumber>
    </recommendedName>
    <alternativeName>
        <fullName evidence="1">NAD(P)H dehydrogenase subunit I</fullName>
        <shortName evidence="1">NDH subunit I</shortName>
    </alternativeName>
    <alternativeName>
        <fullName evidence="1">NADH-plastoquinone oxidoreductase subunit I</fullName>
    </alternativeName>
</protein>
<evidence type="ECO:0000255" key="1">
    <source>
        <dbReference type="HAMAP-Rule" id="MF_01351"/>
    </source>
</evidence>
<evidence type="ECO:0000305" key="2"/>
<proteinExistence type="inferred from homology"/>
<keyword id="KW-0004">4Fe-4S</keyword>
<keyword id="KW-0150">Chloroplast</keyword>
<keyword id="KW-0408">Iron</keyword>
<keyword id="KW-0411">Iron-sulfur</keyword>
<keyword id="KW-0472">Membrane</keyword>
<keyword id="KW-0479">Metal-binding</keyword>
<keyword id="KW-0520">NAD</keyword>
<keyword id="KW-0521">NADP</keyword>
<keyword id="KW-0934">Plastid</keyword>
<keyword id="KW-0618">Plastoquinone</keyword>
<keyword id="KW-0874">Quinone</keyword>
<keyword id="KW-1185">Reference proteome</keyword>
<keyword id="KW-0677">Repeat</keyword>
<keyword id="KW-0793">Thylakoid</keyword>
<keyword id="KW-1278">Translocase</keyword>
<dbReference type="EC" id="7.1.1.-" evidence="1"/>
<dbReference type="EMBL" id="X06720">
    <property type="protein sequence ID" value="CAA29900.1"/>
    <property type="status" value="ALT_INIT"/>
    <property type="molecule type" value="Genomic_DNA"/>
</dbReference>
<dbReference type="EMBL" id="AB042240">
    <property type="protein sequence ID" value="BAB47089.1"/>
    <property type="molecule type" value="Genomic_DNA"/>
</dbReference>
<dbReference type="PIR" id="S00636">
    <property type="entry name" value="S00636"/>
</dbReference>
<dbReference type="RefSeq" id="NP_114312.1">
    <property type="nucleotide sequence ID" value="NC_002762.1"/>
</dbReference>
<dbReference type="SMR" id="P05312"/>
<dbReference type="STRING" id="4565.P05312"/>
<dbReference type="PaxDb" id="4565-EPlTAEP00000010011"/>
<dbReference type="EnsemblPlants" id="TraesARI1B03G00231580.1">
    <property type="protein sequence ID" value="TraesARI1B03G00231580.1.CDS1"/>
    <property type="gene ID" value="TraesARI1B03G00231580"/>
</dbReference>
<dbReference type="EnsemblPlants" id="TraesARI7B03G04256880.1">
    <property type="protein sequence ID" value="TraesARI7B03G04256880.1.CDS1"/>
    <property type="gene ID" value="TraesARI7B03G04256880"/>
</dbReference>
<dbReference type="EnsemblPlants" id="TraesJAG5B03G02933620.1">
    <property type="protein sequence ID" value="TraesJAG5B03G02933620.1.CDS1"/>
    <property type="gene ID" value="TraesJAG5B03G02933620"/>
</dbReference>
<dbReference type="EnsemblPlants" id="TraesKAR2D01G0029900.1">
    <property type="protein sequence ID" value="cds.TraesKAR2D01G0029900.1"/>
    <property type="gene ID" value="TraesKAR2D01G0029900"/>
</dbReference>
<dbReference type="EnsemblPlants" id="TraesKAR4A01G0000310.1">
    <property type="protein sequence ID" value="cds.TraesKAR4A01G0000310.1"/>
    <property type="gene ID" value="TraesKAR4A01G0000310"/>
</dbReference>
<dbReference type="EnsemblPlants" id="TraesKAR6B01G0219970.1">
    <property type="protein sequence ID" value="cds.TraesKAR6B01G0219970.1"/>
    <property type="gene ID" value="TraesKAR6B01G0219970"/>
</dbReference>
<dbReference type="EnsemblPlants" id="TraesKARUn01G0026440.1">
    <property type="protein sequence ID" value="cds.TraesKARUn01G0026440.1"/>
    <property type="gene ID" value="TraesKARUn01G0026440"/>
</dbReference>
<dbReference type="EnsemblPlants" id="TraesKARUn01G0026690.1">
    <property type="protein sequence ID" value="cds.TraesKARUn01G0026690.1"/>
    <property type="gene ID" value="TraesKARUn01G0026690"/>
</dbReference>
<dbReference type="EnsemblPlants" id="TraesKARUn01G0027210.1">
    <property type="protein sequence ID" value="cds.TraesKARUn01G0027210.1"/>
    <property type="gene ID" value="TraesKARUn01G0027210"/>
</dbReference>
<dbReference type="EnsemblPlants" id="TraesKARUn01G0030140.1">
    <property type="protein sequence ID" value="cds.TraesKARUn01G0030140.1"/>
    <property type="gene ID" value="TraesKARUn01G0030140"/>
</dbReference>
<dbReference type="EnsemblPlants" id="TraesKARUn01G0032180.1">
    <property type="protein sequence ID" value="cds.TraesKARUn01G0032180.1"/>
    <property type="gene ID" value="TraesKARUn01G0032180"/>
</dbReference>
<dbReference type="EnsemblPlants" id="TraesKARUn01G0033250.1">
    <property type="protein sequence ID" value="cds.TraesKARUn01G0033250.1"/>
    <property type="gene ID" value="TraesKARUn01G0033250"/>
</dbReference>
<dbReference type="EnsemblPlants" id="TraesKARUn01G0034820.1">
    <property type="protein sequence ID" value="cds.TraesKARUn01G0034820.1"/>
    <property type="gene ID" value="TraesKARUn01G0034820"/>
</dbReference>
<dbReference type="EnsemblPlants" id="TraesKARUn01G0035750.1">
    <property type="protein sequence ID" value="cds.TraesKARUn01G0035750.1"/>
    <property type="gene ID" value="TraesKARUn01G0035750"/>
</dbReference>
<dbReference type="EnsemblPlants" id="TraesKARUn01G0058370.1">
    <property type="protein sequence ID" value="cds.TraesKARUn01G0058370.1"/>
    <property type="gene ID" value="TraesKARUn01G0058370"/>
</dbReference>
<dbReference type="EnsemblPlants" id="TraesKARUn01G0062450.1">
    <property type="protein sequence ID" value="cds.TraesKARUn01G0062450.1"/>
    <property type="gene ID" value="TraesKARUn01G0062450"/>
</dbReference>
<dbReference type="EnsemblPlants" id="TraesKARUn01G0065940.1">
    <property type="protein sequence ID" value="cds.TraesKARUn01G0065940.1"/>
    <property type="gene ID" value="TraesKARUn01G0065940"/>
</dbReference>
<dbReference type="EnsemblPlants" id="TraesKARUn01G0067140.1">
    <property type="protein sequence ID" value="cds.TraesKARUn01G0067140.1"/>
    <property type="gene ID" value="TraesKARUn01G0067140"/>
</dbReference>
<dbReference type="EnsemblPlants" id="TraesKARUn01G0067770.1">
    <property type="protein sequence ID" value="cds.TraesKARUn01G0067770.1"/>
    <property type="gene ID" value="TraesKARUn01G0067770"/>
</dbReference>
<dbReference type="EnsemblPlants" id="TraesKARUn01G0068590.1">
    <property type="protein sequence ID" value="cds.TraesKARUn01G0068590.1"/>
    <property type="gene ID" value="TraesKARUn01G0068590"/>
</dbReference>
<dbReference type="EnsemblPlants" id="TraesKARUn01G0069050.1">
    <property type="protein sequence ID" value="cds.TraesKARUn01G0069050.1"/>
    <property type="gene ID" value="TraesKARUn01G0069050"/>
</dbReference>
<dbReference type="EnsemblPlants" id="TraesKARUn01G0069580.1">
    <property type="protein sequence ID" value="cds.TraesKARUn01G0069580.1"/>
    <property type="gene ID" value="TraesKARUn01G0069580"/>
</dbReference>
<dbReference type="EnsemblPlants" id="TraesKARUn01G0071750.1">
    <property type="protein sequence ID" value="cds.TraesKARUn01G0071750.1"/>
    <property type="gene ID" value="TraesKARUn01G0071750"/>
</dbReference>
<dbReference type="EnsemblPlants" id="TraesKARUn01G0071920.1">
    <property type="protein sequence ID" value="cds.TraesKARUn01G0071920.1"/>
    <property type="gene ID" value="TraesKARUn01G0071920"/>
</dbReference>
<dbReference type="EnsemblPlants" id="TraesKARUn01G0072910.1">
    <property type="protein sequence ID" value="cds.TraesKARUn01G0072910.1"/>
    <property type="gene ID" value="TraesKARUn01G0072910"/>
</dbReference>
<dbReference type="EnsemblPlants" id="TraesKARUn01G0073130.1">
    <property type="protein sequence ID" value="cds.TraesKARUn01G0073130.1"/>
    <property type="gene ID" value="TraesKARUn01G0073130"/>
</dbReference>
<dbReference type="EnsemblPlants" id="TraesKARUn01G0077250.1">
    <property type="protein sequence ID" value="cds.TraesKARUn01G0077250.1"/>
    <property type="gene ID" value="TraesKARUn01G0077250"/>
</dbReference>
<dbReference type="EnsemblPlants" id="TraesKARUn01G0077430.1">
    <property type="protein sequence ID" value="cds.TraesKARUn01G0077430.1"/>
    <property type="gene ID" value="TraesKARUn01G0077430"/>
</dbReference>
<dbReference type="EnsemblPlants" id="TraesKARUn01G0077700.1">
    <property type="protein sequence ID" value="cds.TraesKARUn01G0077700.1"/>
    <property type="gene ID" value="TraesKARUn01G0077700"/>
</dbReference>
<dbReference type="EnsemblPlants" id="TraesKARUn01G0077790.1">
    <property type="protein sequence ID" value="cds.TraesKARUn01G0077790.1"/>
    <property type="gene ID" value="TraesKARUn01G0077790"/>
</dbReference>
<dbReference type="EnsemblPlants" id="TraesKARUn01G0078050.1">
    <property type="protein sequence ID" value="cds.TraesKARUn01G0078050.1"/>
    <property type="gene ID" value="TraesKARUn01G0078050"/>
</dbReference>
<dbReference type="EnsemblPlants" id="TraesKARUn01G0078250.1">
    <property type="protein sequence ID" value="cds.TraesKARUn01G0078250.1"/>
    <property type="gene ID" value="TraesKARUn01G0078250"/>
</dbReference>
<dbReference type="EnsemblPlants" id="TraesKARUn01G0079060.1">
    <property type="protein sequence ID" value="cds.TraesKARUn01G0079060.1"/>
    <property type="gene ID" value="TraesKARUn01G0079060"/>
</dbReference>
<dbReference type="EnsemblPlants" id="TraesKARUn01G0080170.1">
    <property type="protein sequence ID" value="cds.TraesKARUn01G0080170.1"/>
    <property type="gene ID" value="TraesKARUn01G0080170"/>
</dbReference>
<dbReference type="EnsemblPlants" id="TraesKARUn01G0081660.1">
    <property type="protein sequence ID" value="cds.TraesKARUn01G0081660.1"/>
    <property type="gene ID" value="TraesKARUn01G0081660"/>
</dbReference>
<dbReference type="EnsemblPlants" id="TraesKARUn01G0082460.1">
    <property type="protein sequence ID" value="cds.TraesKARUn01G0082460.1"/>
    <property type="gene ID" value="TraesKARUn01G0082460"/>
</dbReference>
<dbReference type="EnsemblPlants" id="TraesKARUn01G0083320.1">
    <property type="protein sequence ID" value="cds.TraesKARUn01G0083320.1"/>
    <property type="gene ID" value="TraesKARUn01G0083320"/>
</dbReference>
<dbReference type="EnsemblPlants" id="TraesKARUn01G0085970.1">
    <property type="protein sequence ID" value="cds.TraesKARUn01G0085970.1"/>
    <property type="gene ID" value="TraesKARUn01G0085970"/>
</dbReference>
<dbReference type="EnsemblPlants" id="TraesKARUn01G0086170.1">
    <property type="protein sequence ID" value="cds.TraesKARUn01G0086170.1"/>
    <property type="gene ID" value="TraesKARUn01G0086170"/>
</dbReference>
<dbReference type="EnsemblPlants" id="TraesKARUn01G0086530.1">
    <property type="protein sequence ID" value="cds.TraesKARUn01G0086530.1"/>
    <property type="gene ID" value="TraesKARUn01G0086530"/>
</dbReference>
<dbReference type="EnsemblPlants" id="TraesKARUn01G0086600.1">
    <property type="protein sequence ID" value="cds.TraesKARUn01G0086600.1"/>
    <property type="gene ID" value="TraesKARUn01G0086600"/>
</dbReference>
<dbReference type="EnsemblPlants" id="TraesKARUn01G0086850.1">
    <property type="protein sequence ID" value="cds.TraesKARUn01G0086850.1"/>
    <property type="gene ID" value="TraesKARUn01G0086850"/>
</dbReference>
<dbReference type="EnsemblPlants" id="TraesKARUn01G0087030.1">
    <property type="protein sequence ID" value="cds.TraesKARUn01G0087030.1"/>
    <property type="gene ID" value="TraesKARUn01G0087030"/>
</dbReference>
<dbReference type="EnsemblPlants" id="TraesKARUn01G0087180.1">
    <property type="protein sequence ID" value="cds.TraesKARUn01G0087180.1"/>
    <property type="gene ID" value="TraesKARUn01G0087180"/>
</dbReference>
<dbReference type="EnsemblPlants" id="TraesKARUn01G0087380.1">
    <property type="protein sequence ID" value="cds.TraesKARUn01G0087380.1"/>
    <property type="gene ID" value="TraesKARUn01G0087380"/>
</dbReference>
<dbReference type="EnsemblPlants" id="TraesKARUn01G0087880.1">
    <property type="protein sequence ID" value="cds.TraesKARUn01G0087880.1"/>
    <property type="gene ID" value="TraesKARUn01G0087880"/>
</dbReference>
<dbReference type="EnsemblPlants" id="TraesKARUn01G0088110.1">
    <property type="protein sequence ID" value="cds.TraesKARUn01G0088110.1"/>
    <property type="gene ID" value="TraesKARUn01G0088110"/>
</dbReference>
<dbReference type="EnsemblPlants" id="TraesKARUn01G0089060.1">
    <property type="protein sequence ID" value="cds.TraesKARUn01G0089060.1"/>
    <property type="gene ID" value="TraesKARUn01G0089060"/>
</dbReference>
<dbReference type="EnsemblPlants" id="TraesKARUn01G0090230.1">
    <property type="protein sequence ID" value="cds.TraesKARUn01G0090230.1"/>
    <property type="gene ID" value="TraesKARUn01G0090230"/>
</dbReference>
<dbReference type="EnsemblPlants" id="TraesKARUn01G0091310.1">
    <property type="protein sequence ID" value="cds.TraesKARUn01G0091310.1"/>
    <property type="gene ID" value="TraesKARUn01G0091310"/>
</dbReference>
<dbReference type="EnsemblPlants" id="TraesKARUn01G0092280.1">
    <property type="protein sequence ID" value="cds.TraesKARUn01G0092280.1"/>
    <property type="gene ID" value="TraesKARUn01G0092280"/>
</dbReference>
<dbReference type="EnsemblPlants" id="TraesKARUn01G0094640.1">
    <property type="protein sequence ID" value="cds.TraesKARUn01G0094640.1"/>
    <property type="gene ID" value="TraesKARUn01G0094640"/>
</dbReference>
<dbReference type="EnsemblPlants" id="TraesKARUn01G0096440.1">
    <property type="protein sequence ID" value="cds.TraesKARUn01G0096440.1"/>
    <property type="gene ID" value="TraesKARUn01G0096440"/>
</dbReference>
<dbReference type="EnsemblPlants" id="TraesKARUn01G0098230.1">
    <property type="protein sequence ID" value="cds.TraesKARUn01G0098230.1"/>
    <property type="gene ID" value="TraesKARUn01G0098230"/>
</dbReference>
<dbReference type="EnsemblPlants" id="TraesKARUn01G0100770.1">
    <property type="protein sequence ID" value="cds.TraesKARUn01G0100770.1"/>
    <property type="gene ID" value="TraesKARUn01G0100770"/>
</dbReference>
<dbReference type="EnsemblPlants" id="TraesKARUn01G0100980.1">
    <property type="protein sequence ID" value="cds.TraesKARUn01G0100980.1"/>
    <property type="gene ID" value="TraesKARUn01G0100980"/>
</dbReference>
<dbReference type="EnsemblPlants" id="TraesKARUn01G0103310.1">
    <property type="protein sequence ID" value="cds.TraesKARUn01G0103310.1"/>
    <property type="gene ID" value="TraesKARUn01G0103310"/>
</dbReference>
<dbReference type="EnsemblPlants" id="TraesKARUn01G0103670.1">
    <property type="protein sequence ID" value="cds.TraesKARUn01G0103670.1"/>
    <property type="gene ID" value="TraesKARUn01G0103670"/>
</dbReference>
<dbReference type="EnsemblPlants" id="TraesKARUn01G0104790.1">
    <property type="protein sequence ID" value="cds.TraesKARUn01G0104790.1"/>
    <property type="gene ID" value="TraesKARUn01G0104790"/>
</dbReference>
<dbReference type="EnsemblPlants" id="TraesKARUn01G0105440.1">
    <property type="protein sequence ID" value="cds.TraesKARUn01G0105440.1"/>
    <property type="gene ID" value="TraesKARUn01G0105440"/>
</dbReference>
<dbReference type="EnsemblPlants" id="TraesKARUn01G0105870.1">
    <property type="protein sequence ID" value="cds.TraesKARUn01G0105870.1"/>
    <property type="gene ID" value="TraesKARUn01G0105870"/>
</dbReference>
<dbReference type="EnsemblPlants" id="TraesKARUn01G0106490.1">
    <property type="protein sequence ID" value="cds.TraesKARUn01G0106490.1"/>
    <property type="gene ID" value="TraesKARUn01G0106490"/>
</dbReference>
<dbReference type="EnsemblPlants" id="TraesKARUn01G0107050.1">
    <property type="protein sequence ID" value="cds.TraesKARUn01G0107050.1"/>
    <property type="gene ID" value="TraesKARUn01G0107050"/>
</dbReference>
<dbReference type="EnsemblPlants" id="TraesKARUn01G0107870.1">
    <property type="protein sequence ID" value="cds.TraesKARUn01G0107870.1"/>
    <property type="gene ID" value="TraesKARUn01G0107870"/>
</dbReference>
<dbReference type="EnsemblPlants" id="TraesKARUn01G0108520.1">
    <property type="protein sequence ID" value="cds.TraesKARUn01G0108520.1"/>
    <property type="gene ID" value="TraesKARUn01G0108520"/>
</dbReference>
<dbReference type="EnsemblPlants" id="TraesKARUn01G0109200.1">
    <property type="protein sequence ID" value="cds.TraesKARUn01G0109200.1"/>
    <property type="gene ID" value="TraesKARUn01G0109200"/>
</dbReference>
<dbReference type="EnsemblPlants" id="TraesKARUn01G0109890.1">
    <property type="protein sequence ID" value="cds.TraesKARUn01G0109890.1"/>
    <property type="gene ID" value="TraesKARUn01G0109890"/>
</dbReference>
<dbReference type="EnsemblPlants" id="TraesKARUn01G0111480.1">
    <property type="protein sequence ID" value="cds.TraesKARUn01G0111480.1"/>
    <property type="gene ID" value="TraesKARUn01G0111480"/>
</dbReference>
<dbReference type="EnsemblPlants" id="TraesKARUn01G0111570.1">
    <property type="protein sequence ID" value="cds.TraesKARUn01G0111570.1"/>
    <property type="gene ID" value="TraesKARUn01G0111570"/>
</dbReference>
<dbReference type="EnsemblPlants" id="TraesKARUn01G0111660.1">
    <property type="protein sequence ID" value="cds.TraesKARUn01G0111660.1"/>
    <property type="gene ID" value="TraesKARUn01G0111660"/>
</dbReference>
<dbReference type="EnsemblPlants" id="TraesKARUn01G0111860.1">
    <property type="protein sequence ID" value="cds.TraesKARUn01G0111860.1"/>
    <property type="gene ID" value="TraesKARUn01G0111860"/>
</dbReference>
<dbReference type="EnsemblPlants" id="TraesKARUn01G0111870.1">
    <property type="protein sequence ID" value="cds.TraesKARUn01G0111870.1"/>
    <property type="gene ID" value="TraesKARUn01G0111870"/>
</dbReference>
<dbReference type="EnsemblPlants" id="TraesKARUn01G0112470.1">
    <property type="protein sequence ID" value="cds.TraesKARUn01G0112470.1"/>
    <property type="gene ID" value="TraesKARUn01G0112470"/>
</dbReference>
<dbReference type="EnsemblPlants" id="TraesKARUn01G0113940.1">
    <property type="protein sequence ID" value="cds.TraesKARUn01G0113940.1"/>
    <property type="gene ID" value="TraesKARUn01G0113940"/>
</dbReference>
<dbReference type="EnsemblPlants" id="TraesKARUn01G0118460.1">
    <property type="protein sequence ID" value="cds.TraesKARUn01G0118460.1"/>
    <property type="gene ID" value="TraesKARUn01G0118460"/>
</dbReference>
<dbReference type="EnsemblPlants" id="TraesKARUn01G0119070.1">
    <property type="protein sequence ID" value="cds.TraesKARUn01G0119070.1"/>
    <property type="gene ID" value="TraesKARUn01G0119070"/>
</dbReference>
<dbReference type="EnsemblPlants" id="TraesKARUn01G0119810.1">
    <property type="protein sequence ID" value="cds.TraesKARUn01G0119810.1"/>
    <property type="gene ID" value="TraesKARUn01G0119810"/>
</dbReference>
<dbReference type="EnsemblPlants" id="TraesKARUn01G0119940.1">
    <property type="protein sequence ID" value="cds.TraesKARUn01G0119940.1"/>
    <property type="gene ID" value="TraesKARUn01G0119940"/>
</dbReference>
<dbReference type="EnsemblPlants" id="TraesKARUn01G0120010.1">
    <property type="protein sequence ID" value="cds.TraesKARUn01G0120010.1"/>
    <property type="gene ID" value="TraesKARUn01G0120010"/>
</dbReference>
<dbReference type="EnsemblPlants" id="TraesKARUn01G0120290.1">
    <property type="protein sequence ID" value="cds.TraesKARUn01G0120290.1"/>
    <property type="gene ID" value="TraesKARUn01G0120290"/>
</dbReference>
<dbReference type="EnsemblPlants" id="TraesKARUn01G0120800.1">
    <property type="protein sequence ID" value="cds.TraesKARUn01G0120800.1"/>
    <property type="gene ID" value="TraesKARUn01G0120800"/>
</dbReference>
<dbReference type="EnsemblPlants" id="TraesKARUn01G0121300.1">
    <property type="protein sequence ID" value="cds.TraesKARUn01G0121300.1"/>
    <property type="gene ID" value="TraesKARUn01G0121300"/>
</dbReference>
<dbReference type="EnsemblPlants" id="TraesKARUn01G0125990.1">
    <property type="protein sequence ID" value="cds.TraesKARUn01G0125990.1"/>
    <property type="gene ID" value="TraesKARUn01G0125990"/>
</dbReference>
<dbReference type="EnsemblPlants" id="TraesKARUn01G0126280.1">
    <property type="protein sequence ID" value="cds.TraesKARUn01G0126280.1"/>
    <property type="gene ID" value="TraesKARUn01G0126280"/>
</dbReference>
<dbReference type="EnsemblPlants" id="TraesKARUn01G0127070.1">
    <property type="protein sequence ID" value="cds.TraesKARUn01G0127070.1"/>
    <property type="gene ID" value="TraesKARUn01G0127070"/>
</dbReference>
<dbReference type="EnsemblPlants" id="TraesKARUn01G0127590.1">
    <property type="protein sequence ID" value="cds.TraesKARUn01G0127590.1"/>
    <property type="gene ID" value="TraesKARUn01G0127590"/>
</dbReference>
<dbReference type="EnsemblPlants" id="TraesKARUn01G0128240.1">
    <property type="protein sequence ID" value="cds.TraesKARUn01G0128240.1"/>
    <property type="gene ID" value="TraesKARUn01G0128240"/>
</dbReference>
<dbReference type="EnsemblPlants" id="TraesKARUn01G0129110.1">
    <property type="protein sequence ID" value="cds.TraesKARUn01G0129110.1"/>
    <property type="gene ID" value="TraesKARUn01G0129110"/>
</dbReference>
<dbReference type="EnsemblPlants" id="TraesKARUn01G0129680.1">
    <property type="protein sequence ID" value="cds.TraesKARUn01G0129680.1"/>
    <property type="gene ID" value="TraesKARUn01G0129680"/>
</dbReference>
<dbReference type="EnsemblPlants" id="TraesKARUn01G0132870.1">
    <property type="protein sequence ID" value="cds.TraesKARUn01G0132870.1"/>
    <property type="gene ID" value="TraesKARUn01G0132870"/>
</dbReference>
<dbReference type="EnsemblPlants" id="TraesKARUn01G0135570.1">
    <property type="protein sequence ID" value="cds.TraesKARUn01G0135570.1"/>
    <property type="gene ID" value="TraesKARUn01G0135570"/>
</dbReference>
<dbReference type="EnsemblPlants" id="TraesKARUn01G0139180.1">
    <property type="protein sequence ID" value="cds.TraesKARUn01G0139180.1"/>
    <property type="gene ID" value="TraesKARUn01G0139180"/>
</dbReference>
<dbReference type="EnsemblPlants" id="TraesKARUn01G0139630.1">
    <property type="protein sequence ID" value="cds.TraesKARUn01G0139630.1"/>
    <property type="gene ID" value="TraesKARUn01G0139630"/>
</dbReference>
<dbReference type="EnsemblPlants" id="TraesKARUn01G0140240.1">
    <property type="protein sequence ID" value="cds.TraesKARUn01G0140240.1"/>
    <property type="gene ID" value="TraesKARUn01G0140240"/>
</dbReference>
<dbReference type="EnsemblPlants" id="TraesKARUn01G0141540.1">
    <property type="protein sequence ID" value="cds.TraesKARUn01G0141540.1"/>
    <property type="gene ID" value="TraesKARUn01G0141540"/>
</dbReference>
<dbReference type="EnsemblPlants" id="TraesKARUn01G0141890.1">
    <property type="protein sequence ID" value="cds.TraesKARUn01G0141890.1"/>
    <property type="gene ID" value="TraesKARUn01G0141890"/>
</dbReference>
<dbReference type="EnsemblPlants" id="TraesKARUn01G0142610.1">
    <property type="protein sequence ID" value="cds.TraesKARUn01G0142610.1"/>
    <property type="gene ID" value="TraesKARUn01G0142610"/>
</dbReference>
<dbReference type="EnsemblPlants" id="TraesKARUn01G0144300.1">
    <property type="protein sequence ID" value="cds.TraesKARUn01G0144300.1"/>
    <property type="gene ID" value="TraesKARUn01G0144300"/>
</dbReference>
<dbReference type="EnsemblPlants" id="TraesKARUn01G0146610.1">
    <property type="protein sequence ID" value="cds.TraesKARUn01G0146610.1"/>
    <property type="gene ID" value="TraesKARUn01G0146610"/>
</dbReference>
<dbReference type="EnsemblPlants" id="TraesKARUn01G0147860.1">
    <property type="protein sequence ID" value="cds.TraesKARUn01G0147860.1"/>
    <property type="gene ID" value="TraesKARUn01G0147860"/>
</dbReference>
<dbReference type="EnsemblPlants" id="TraesKARUn01G0148890.1">
    <property type="protein sequence ID" value="cds.TraesKARUn01G0148890.1"/>
    <property type="gene ID" value="TraesKARUn01G0148890"/>
</dbReference>
<dbReference type="EnsemblPlants" id="TraesKARUn01G0150340.1">
    <property type="protein sequence ID" value="cds.TraesKARUn01G0150340.1"/>
    <property type="gene ID" value="TraesKARUn01G0150340"/>
</dbReference>
<dbReference type="EnsemblPlants" id="TraesKARUn01G0150880.1">
    <property type="protein sequence ID" value="cds.TraesKARUn01G0150880.1"/>
    <property type="gene ID" value="TraesKARUn01G0150880"/>
</dbReference>
<dbReference type="EnsemblPlants" id="TraesKARUn01G0151630.1">
    <property type="protein sequence ID" value="cds.TraesKARUn01G0151630.1"/>
    <property type="gene ID" value="TraesKARUn01G0151630"/>
</dbReference>
<dbReference type="EnsemblPlants" id="TraesKARUn01G0154670.1">
    <property type="protein sequence ID" value="cds.TraesKARUn01G0154670.1"/>
    <property type="gene ID" value="TraesKARUn01G0154670"/>
</dbReference>
<dbReference type="EnsemblPlants" id="TraesKARUn01G0154990.1">
    <property type="protein sequence ID" value="cds.TraesKARUn01G0154990.1"/>
    <property type="gene ID" value="TraesKARUn01G0154990"/>
</dbReference>
<dbReference type="EnsemblPlants" id="TraesKARUn01G0156590.1">
    <property type="protein sequence ID" value="cds.TraesKARUn01G0156590.1"/>
    <property type="gene ID" value="TraesKARUn01G0156590"/>
</dbReference>
<dbReference type="EnsemblPlants" id="TraesKARUn01G0157810.1">
    <property type="protein sequence ID" value="cds.TraesKARUn01G0157810.1"/>
    <property type="gene ID" value="TraesKARUn01G0157810"/>
</dbReference>
<dbReference type="EnsemblPlants" id="TraesKARUn01G0158170.1">
    <property type="protein sequence ID" value="cds.TraesKARUn01G0158170.1"/>
    <property type="gene ID" value="TraesKARUn01G0158170"/>
</dbReference>
<dbReference type="EnsemblPlants" id="TraesKARUn01G0158980.1">
    <property type="protein sequence ID" value="cds.TraesKARUn01G0158980.1"/>
    <property type="gene ID" value="TraesKARUn01G0158980"/>
</dbReference>
<dbReference type="EnsemblPlants" id="TraesKARUn01G0159320.1">
    <property type="protein sequence ID" value="cds.TraesKARUn01G0159320.1"/>
    <property type="gene ID" value="TraesKARUn01G0159320"/>
</dbReference>
<dbReference type="EnsemblPlants" id="TraesKARUn01G0160000.1">
    <property type="protein sequence ID" value="cds.TraesKARUn01G0160000.1"/>
    <property type="gene ID" value="TraesKARUn01G0160000"/>
</dbReference>
<dbReference type="EnsemblPlants" id="TraesKARUn01G0160720.1">
    <property type="protein sequence ID" value="cds.TraesKARUn01G0160720.1"/>
    <property type="gene ID" value="TraesKARUn01G0160720"/>
</dbReference>
<dbReference type="EnsemblPlants" id="TraesKARUn01G0161680.1">
    <property type="protein sequence ID" value="cds.TraesKARUn01G0161680.1"/>
    <property type="gene ID" value="TraesKARUn01G0161680"/>
</dbReference>
<dbReference type="EnsemblPlants" id="TraesKARUn01G0162470.1">
    <property type="protein sequence ID" value="cds.TraesKARUn01G0162470.1"/>
    <property type="gene ID" value="TraesKARUn01G0162470"/>
</dbReference>
<dbReference type="EnsemblPlants" id="TraesKARUn01G0162820.1">
    <property type="protein sequence ID" value="cds.TraesKARUn01G0162820.1"/>
    <property type="gene ID" value="TraesKARUn01G0162820"/>
</dbReference>
<dbReference type="EnsemblPlants" id="TraesKARUn01G0166580.1">
    <property type="protein sequence ID" value="cds.TraesKARUn01G0166580.1"/>
    <property type="gene ID" value="TraesKARUn01G0166580"/>
</dbReference>
<dbReference type="EnsemblPlants" id="TraesKARUn01G0167530.1">
    <property type="protein sequence ID" value="cds.TraesKARUn01G0167530.1"/>
    <property type="gene ID" value="TraesKARUn01G0167530"/>
</dbReference>
<dbReference type="EnsemblPlants" id="TraesKARUn01G0168880.1">
    <property type="protein sequence ID" value="cds.TraesKARUn01G0168880.1"/>
    <property type="gene ID" value="TraesKARUn01G0168880"/>
</dbReference>
<dbReference type="EnsemblPlants" id="TraesKARUn01G0169690.1">
    <property type="protein sequence ID" value="cds.TraesKARUn01G0169690.1"/>
    <property type="gene ID" value="TraesKARUn01G0169690"/>
</dbReference>
<dbReference type="EnsemblPlants" id="TraesKARUn01G0170640.1">
    <property type="protein sequence ID" value="cds.TraesKARUn01G0170640.1"/>
    <property type="gene ID" value="TraesKARUn01G0170640"/>
</dbReference>
<dbReference type="EnsemblPlants" id="TraesKARUn01G0170750.1">
    <property type="protein sequence ID" value="cds.TraesKARUn01G0170750.1"/>
    <property type="gene ID" value="TraesKARUn01G0170750"/>
</dbReference>
<dbReference type="EnsemblPlants" id="TraesKARUn01G0170980.1">
    <property type="protein sequence ID" value="cds.TraesKARUn01G0170980.1"/>
    <property type="gene ID" value="TraesKARUn01G0170980"/>
</dbReference>
<dbReference type="EnsemblPlants" id="TraesKARUn01G0172900.1">
    <property type="protein sequence ID" value="cds.TraesKARUn01G0172900.1"/>
    <property type="gene ID" value="TraesKARUn01G0172900"/>
</dbReference>
<dbReference type="EnsemblPlants" id="TraesKARUn01G0175390.1">
    <property type="protein sequence ID" value="cds.TraesKARUn01G0175390.1"/>
    <property type="gene ID" value="TraesKARUn01G0175390"/>
</dbReference>
<dbReference type="EnsemblPlants" id="TraesKARUn01G0175840.1">
    <property type="protein sequence ID" value="cds.TraesKARUn01G0175840.1"/>
    <property type="gene ID" value="TraesKARUn01G0175840"/>
</dbReference>
<dbReference type="EnsemblPlants" id="TraesKARUn01G0176360.1">
    <property type="protein sequence ID" value="cds.TraesKARUn01G0176360.1"/>
    <property type="gene ID" value="TraesKARUn01G0176360"/>
</dbReference>
<dbReference type="EnsemblPlants" id="TraesKARUn01G0176710.1">
    <property type="protein sequence ID" value="cds.TraesKARUn01G0176710.1"/>
    <property type="gene ID" value="TraesKARUn01G0176710"/>
</dbReference>
<dbReference type="EnsemblPlants" id="TraesKARUn01G0177890.1">
    <property type="protein sequence ID" value="cds.TraesKARUn01G0177890.1"/>
    <property type="gene ID" value="TraesKARUn01G0177890"/>
</dbReference>
<dbReference type="EnsemblPlants" id="TraesKARUn01G0178310.1">
    <property type="protein sequence ID" value="cds.TraesKARUn01G0178310.1"/>
    <property type="gene ID" value="TraesKARUn01G0178310"/>
</dbReference>
<dbReference type="EnsemblPlants" id="TraesKARUn01G0179320.1">
    <property type="protein sequence ID" value="cds.TraesKARUn01G0179320.1"/>
    <property type="gene ID" value="TraesKARUn01G0179320"/>
</dbReference>
<dbReference type="EnsemblPlants" id="TraesKARUn01G0180490.1">
    <property type="protein sequence ID" value="cds.TraesKARUn01G0180490.1"/>
    <property type="gene ID" value="TraesKARUn01G0180490"/>
</dbReference>
<dbReference type="EnsemblPlants" id="TraesKARUn01G0180780.1">
    <property type="protein sequence ID" value="cds.TraesKARUn01G0180780.1"/>
    <property type="gene ID" value="TraesKARUn01G0180780"/>
</dbReference>
<dbReference type="EnsemblPlants" id="TraesKARUn01G0183340.1">
    <property type="protein sequence ID" value="cds.TraesKARUn01G0183340.1"/>
    <property type="gene ID" value="TraesKARUn01G0183340"/>
</dbReference>
<dbReference type="EnsemblPlants" id="TraesKARUn01G0186110.1">
    <property type="protein sequence ID" value="cds.TraesKARUn01G0186110.1"/>
    <property type="gene ID" value="TraesKARUn01G0186110"/>
</dbReference>
<dbReference type="EnsemblPlants" id="TraesKARUn01G0187560.1">
    <property type="protein sequence ID" value="cds.TraesKARUn01G0187560.1"/>
    <property type="gene ID" value="TraesKARUn01G0187560"/>
</dbReference>
<dbReference type="EnsemblPlants" id="TraesKARUn01G0187740.1">
    <property type="protein sequence ID" value="cds.TraesKARUn01G0187740.1"/>
    <property type="gene ID" value="TraesKARUn01G0187740"/>
</dbReference>
<dbReference type="EnsemblPlants" id="TraesKARUn01G0188060.1">
    <property type="protein sequence ID" value="cds.TraesKARUn01G0188060.1"/>
    <property type="gene ID" value="TraesKARUn01G0188060"/>
</dbReference>
<dbReference type="EnsemblPlants" id="TraesKARUn01G0188430.1">
    <property type="protein sequence ID" value="cds.TraesKARUn01G0188430.1"/>
    <property type="gene ID" value="TraesKARUn01G0188430"/>
</dbReference>
<dbReference type="EnsemblPlants" id="TraesKARUn01G0189120.1">
    <property type="protein sequence ID" value="cds.TraesKARUn01G0189120.1"/>
    <property type="gene ID" value="TraesKARUn01G0189120"/>
</dbReference>
<dbReference type="EnsemblPlants" id="TraesKARUn01G0189860.1">
    <property type="protein sequence ID" value="cds.TraesKARUn01G0189860.1"/>
    <property type="gene ID" value="TraesKARUn01G0189860"/>
</dbReference>
<dbReference type="EnsemblPlants" id="TraesKARUn01G0191120.1">
    <property type="protein sequence ID" value="cds.TraesKARUn01G0191120.1"/>
    <property type="gene ID" value="TraesKARUn01G0191120"/>
</dbReference>
<dbReference type="EnsemblPlants" id="TraesLDM2D03G01293910.1">
    <property type="protein sequence ID" value="TraesLDM2D03G01293910.1.CDS1"/>
    <property type="gene ID" value="TraesLDM2D03G01293910"/>
</dbReference>
<dbReference type="EnsemblPlants" id="TraesNOR2D03G01309680.1">
    <property type="protein sequence ID" value="TraesNOR2D03G01309680.1.CDS1"/>
    <property type="gene ID" value="TraesNOR2D03G01309680"/>
</dbReference>
<dbReference type="EnsemblPlants" id="TraesNOR7D03G04360980.1">
    <property type="protein sequence ID" value="TraesNOR7D03G04360980.1.CDS1"/>
    <property type="gene ID" value="TraesNOR7D03G04360980"/>
</dbReference>
<dbReference type="EnsemblPlants" id="TraesPARA_EIv1.0_2645120.1">
    <property type="protein sequence ID" value="TraesPARA_EIv1.0_2645120.1.CDS1"/>
    <property type="gene ID" value="TraesPARA_EIv1.0_2645120"/>
</dbReference>
<dbReference type="EnsemblPlants" id="TraesPARA_EIv1.0_2645270.1">
    <property type="protein sequence ID" value="TraesPARA_EIv1.0_2645270.1.CDS1"/>
    <property type="gene ID" value="TraesPARA_EIv1.0_2645270"/>
</dbReference>
<dbReference type="EnsemblPlants" id="TraesPARA_EIv1.0_2645980.1">
    <property type="protein sequence ID" value="TraesPARA_EIv1.0_2645980.1.CDS1"/>
    <property type="gene ID" value="TraesPARA_EIv1.0_2645980"/>
</dbReference>
<dbReference type="EnsemblPlants" id="TraesPARA_EIv1.0_2667880.1">
    <property type="protein sequence ID" value="TraesPARA_EIv1.0_2667880.1.CDS1"/>
    <property type="gene ID" value="TraesPARA_EIv1.0_2667880"/>
</dbReference>
<dbReference type="EnsemblPlants" id="TraesPARA_EIv1.0_2670990.1">
    <property type="protein sequence ID" value="TraesPARA_EIv1.0_2670990.1.CDS1"/>
    <property type="gene ID" value="TraesPARA_EIv1.0_2670990"/>
</dbReference>
<dbReference type="EnsemblPlants" id="TraesPARA_EIv1.0_2671590.1">
    <property type="protein sequence ID" value="TraesPARA_EIv1.0_2671590.1.CDS1"/>
    <property type="gene ID" value="TraesPARA_EIv1.0_2671590"/>
</dbReference>
<dbReference type="EnsemblPlants" id="TraesPARA_EIv1.0_2677410.1">
    <property type="protein sequence ID" value="TraesPARA_EIv1.0_2677410.1.CDS1"/>
    <property type="gene ID" value="TraesPARA_EIv1.0_2677410"/>
</dbReference>
<dbReference type="EnsemblPlants" id="TraesPARA_EIv1.0_2677630.1">
    <property type="protein sequence ID" value="TraesPARA_EIv1.0_2677630.1.CDS1"/>
    <property type="gene ID" value="TraesPARA_EIv1.0_2677630"/>
</dbReference>
<dbReference type="EnsemblPlants" id="TraesPARA_EIv1.0_2679960.1">
    <property type="protein sequence ID" value="TraesPARA_EIv1.0_2679960.1.CDS1"/>
    <property type="gene ID" value="TraesPARA_EIv1.0_2679960"/>
</dbReference>
<dbReference type="EnsemblPlants" id="TraesPARA_EIv1.0_2681300.1">
    <property type="protein sequence ID" value="TraesPARA_EIv1.0_2681300.1.CDS1"/>
    <property type="gene ID" value="TraesPARA_EIv1.0_2681300"/>
</dbReference>
<dbReference type="EnsemblPlants" id="TraesPARA_EIv1.0_2681390.1">
    <property type="protein sequence ID" value="TraesPARA_EIv1.0_2681390.1.CDS1"/>
    <property type="gene ID" value="TraesPARA_EIv1.0_2681390"/>
</dbReference>
<dbReference type="EnsemblPlants" id="TraesPARA_EIv1.0_2681610.1">
    <property type="protein sequence ID" value="TraesPARA_EIv1.0_2681610.1.CDS1"/>
    <property type="gene ID" value="TraesPARA_EIv1.0_2681610"/>
</dbReference>
<dbReference type="GeneID" id="803107"/>
<dbReference type="Gramene" id="TraesARI1B03G00231580.1">
    <property type="protein sequence ID" value="TraesARI1B03G00231580.1.CDS1"/>
    <property type="gene ID" value="TraesARI1B03G00231580"/>
</dbReference>
<dbReference type="Gramene" id="TraesARI7B03G04256880.1">
    <property type="protein sequence ID" value="TraesARI7B03G04256880.1.CDS1"/>
    <property type="gene ID" value="TraesARI7B03G04256880"/>
</dbReference>
<dbReference type="Gramene" id="TraesJAG5B03G02933620.1">
    <property type="protein sequence ID" value="TraesJAG5B03G02933620.1.CDS1"/>
    <property type="gene ID" value="TraesJAG5B03G02933620"/>
</dbReference>
<dbReference type="Gramene" id="TraesKAR2D01G0029900.1">
    <property type="protein sequence ID" value="cds.TraesKAR2D01G0029900.1"/>
    <property type="gene ID" value="TraesKAR2D01G0029900"/>
</dbReference>
<dbReference type="Gramene" id="TraesKAR4A01G0000310.1">
    <property type="protein sequence ID" value="cds.TraesKAR4A01G0000310.1"/>
    <property type="gene ID" value="TraesKAR4A01G0000310"/>
</dbReference>
<dbReference type="Gramene" id="TraesKAR6B01G0219970.1">
    <property type="protein sequence ID" value="cds.TraesKAR6B01G0219970.1"/>
    <property type="gene ID" value="TraesKAR6B01G0219970"/>
</dbReference>
<dbReference type="Gramene" id="TraesKARUn01G0026440.1">
    <property type="protein sequence ID" value="cds.TraesKARUn01G0026440.1"/>
    <property type="gene ID" value="TraesKARUn01G0026440"/>
</dbReference>
<dbReference type="Gramene" id="TraesKARUn01G0026690.1">
    <property type="protein sequence ID" value="cds.TraesKARUn01G0026690.1"/>
    <property type="gene ID" value="TraesKARUn01G0026690"/>
</dbReference>
<dbReference type="Gramene" id="TraesKARUn01G0027210.1">
    <property type="protein sequence ID" value="cds.TraesKARUn01G0027210.1"/>
    <property type="gene ID" value="TraesKARUn01G0027210"/>
</dbReference>
<dbReference type="Gramene" id="TraesKARUn01G0030140.1">
    <property type="protein sequence ID" value="cds.TraesKARUn01G0030140.1"/>
    <property type="gene ID" value="TraesKARUn01G0030140"/>
</dbReference>
<dbReference type="Gramene" id="TraesKARUn01G0032180.1">
    <property type="protein sequence ID" value="cds.TraesKARUn01G0032180.1"/>
    <property type="gene ID" value="TraesKARUn01G0032180"/>
</dbReference>
<dbReference type="Gramene" id="TraesKARUn01G0033250.1">
    <property type="protein sequence ID" value="cds.TraesKARUn01G0033250.1"/>
    <property type="gene ID" value="TraesKARUn01G0033250"/>
</dbReference>
<dbReference type="Gramene" id="TraesKARUn01G0034820.1">
    <property type="protein sequence ID" value="cds.TraesKARUn01G0034820.1"/>
    <property type="gene ID" value="TraesKARUn01G0034820"/>
</dbReference>
<dbReference type="Gramene" id="TraesKARUn01G0035750.1">
    <property type="protein sequence ID" value="cds.TraesKARUn01G0035750.1"/>
    <property type="gene ID" value="TraesKARUn01G0035750"/>
</dbReference>
<dbReference type="Gramene" id="TraesKARUn01G0058370.1">
    <property type="protein sequence ID" value="cds.TraesKARUn01G0058370.1"/>
    <property type="gene ID" value="TraesKARUn01G0058370"/>
</dbReference>
<dbReference type="Gramene" id="TraesKARUn01G0062450.1">
    <property type="protein sequence ID" value="cds.TraesKARUn01G0062450.1"/>
    <property type="gene ID" value="TraesKARUn01G0062450"/>
</dbReference>
<dbReference type="Gramene" id="TraesKARUn01G0065940.1">
    <property type="protein sequence ID" value="cds.TraesKARUn01G0065940.1"/>
    <property type="gene ID" value="TraesKARUn01G0065940"/>
</dbReference>
<dbReference type="Gramene" id="TraesKARUn01G0067140.1">
    <property type="protein sequence ID" value="cds.TraesKARUn01G0067140.1"/>
    <property type="gene ID" value="TraesKARUn01G0067140"/>
</dbReference>
<dbReference type="Gramene" id="TraesKARUn01G0067770.1">
    <property type="protein sequence ID" value="cds.TraesKARUn01G0067770.1"/>
    <property type="gene ID" value="TraesKARUn01G0067770"/>
</dbReference>
<dbReference type="Gramene" id="TraesKARUn01G0068590.1">
    <property type="protein sequence ID" value="cds.TraesKARUn01G0068590.1"/>
    <property type="gene ID" value="TraesKARUn01G0068590"/>
</dbReference>
<dbReference type="Gramene" id="TraesKARUn01G0069050.1">
    <property type="protein sequence ID" value="cds.TraesKARUn01G0069050.1"/>
    <property type="gene ID" value="TraesKARUn01G0069050"/>
</dbReference>
<dbReference type="Gramene" id="TraesKARUn01G0069580.1">
    <property type="protein sequence ID" value="cds.TraesKARUn01G0069580.1"/>
    <property type="gene ID" value="TraesKARUn01G0069580"/>
</dbReference>
<dbReference type="Gramene" id="TraesKARUn01G0071750.1">
    <property type="protein sequence ID" value="cds.TraesKARUn01G0071750.1"/>
    <property type="gene ID" value="TraesKARUn01G0071750"/>
</dbReference>
<dbReference type="Gramene" id="TraesKARUn01G0071920.1">
    <property type="protein sequence ID" value="cds.TraesKARUn01G0071920.1"/>
    <property type="gene ID" value="TraesKARUn01G0071920"/>
</dbReference>
<dbReference type="Gramene" id="TraesKARUn01G0072910.1">
    <property type="protein sequence ID" value="cds.TraesKARUn01G0072910.1"/>
    <property type="gene ID" value="TraesKARUn01G0072910"/>
</dbReference>
<dbReference type="Gramene" id="TraesKARUn01G0073130.1">
    <property type="protein sequence ID" value="cds.TraesKARUn01G0073130.1"/>
    <property type="gene ID" value="TraesKARUn01G0073130"/>
</dbReference>
<dbReference type="Gramene" id="TraesKARUn01G0077250.1">
    <property type="protein sequence ID" value="cds.TraesKARUn01G0077250.1"/>
    <property type="gene ID" value="TraesKARUn01G0077250"/>
</dbReference>
<dbReference type="Gramene" id="TraesKARUn01G0077430.1">
    <property type="protein sequence ID" value="cds.TraesKARUn01G0077430.1"/>
    <property type="gene ID" value="TraesKARUn01G0077430"/>
</dbReference>
<dbReference type="Gramene" id="TraesKARUn01G0077700.1">
    <property type="protein sequence ID" value="cds.TraesKARUn01G0077700.1"/>
    <property type="gene ID" value="TraesKARUn01G0077700"/>
</dbReference>
<dbReference type="Gramene" id="TraesKARUn01G0077790.1">
    <property type="protein sequence ID" value="cds.TraesKARUn01G0077790.1"/>
    <property type="gene ID" value="TraesKARUn01G0077790"/>
</dbReference>
<dbReference type="Gramene" id="TraesKARUn01G0078050.1">
    <property type="protein sequence ID" value="cds.TraesKARUn01G0078050.1"/>
    <property type="gene ID" value="TraesKARUn01G0078050"/>
</dbReference>
<dbReference type="Gramene" id="TraesKARUn01G0078250.1">
    <property type="protein sequence ID" value="cds.TraesKARUn01G0078250.1"/>
    <property type="gene ID" value="TraesKARUn01G0078250"/>
</dbReference>
<dbReference type="Gramene" id="TraesKARUn01G0079060.1">
    <property type="protein sequence ID" value="cds.TraesKARUn01G0079060.1"/>
    <property type="gene ID" value="TraesKARUn01G0079060"/>
</dbReference>
<dbReference type="Gramene" id="TraesKARUn01G0080170.1">
    <property type="protein sequence ID" value="cds.TraesKARUn01G0080170.1"/>
    <property type="gene ID" value="TraesKARUn01G0080170"/>
</dbReference>
<dbReference type="Gramene" id="TraesKARUn01G0081660.1">
    <property type="protein sequence ID" value="cds.TraesKARUn01G0081660.1"/>
    <property type="gene ID" value="TraesKARUn01G0081660"/>
</dbReference>
<dbReference type="Gramene" id="TraesKARUn01G0082460.1">
    <property type="protein sequence ID" value="cds.TraesKARUn01G0082460.1"/>
    <property type="gene ID" value="TraesKARUn01G0082460"/>
</dbReference>
<dbReference type="Gramene" id="TraesKARUn01G0083320.1">
    <property type="protein sequence ID" value="cds.TraesKARUn01G0083320.1"/>
    <property type="gene ID" value="TraesKARUn01G0083320"/>
</dbReference>
<dbReference type="Gramene" id="TraesKARUn01G0085970.1">
    <property type="protein sequence ID" value="cds.TraesKARUn01G0085970.1"/>
    <property type="gene ID" value="TraesKARUn01G0085970"/>
</dbReference>
<dbReference type="Gramene" id="TraesKARUn01G0086170.1">
    <property type="protein sequence ID" value="cds.TraesKARUn01G0086170.1"/>
    <property type="gene ID" value="TraesKARUn01G0086170"/>
</dbReference>
<dbReference type="Gramene" id="TraesKARUn01G0086530.1">
    <property type="protein sequence ID" value="cds.TraesKARUn01G0086530.1"/>
    <property type="gene ID" value="TraesKARUn01G0086530"/>
</dbReference>
<dbReference type="Gramene" id="TraesKARUn01G0086600.1">
    <property type="protein sequence ID" value="cds.TraesKARUn01G0086600.1"/>
    <property type="gene ID" value="TraesKARUn01G0086600"/>
</dbReference>
<dbReference type="Gramene" id="TraesKARUn01G0086850.1">
    <property type="protein sequence ID" value="cds.TraesKARUn01G0086850.1"/>
    <property type="gene ID" value="TraesKARUn01G0086850"/>
</dbReference>
<dbReference type="Gramene" id="TraesKARUn01G0087030.1">
    <property type="protein sequence ID" value="cds.TraesKARUn01G0087030.1"/>
    <property type="gene ID" value="TraesKARUn01G0087030"/>
</dbReference>
<dbReference type="Gramene" id="TraesKARUn01G0087180.1">
    <property type="protein sequence ID" value="cds.TraesKARUn01G0087180.1"/>
    <property type="gene ID" value="TraesKARUn01G0087180"/>
</dbReference>
<dbReference type="Gramene" id="TraesKARUn01G0087380.1">
    <property type="protein sequence ID" value="cds.TraesKARUn01G0087380.1"/>
    <property type="gene ID" value="TraesKARUn01G0087380"/>
</dbReference>
<dbReference type="Gramene" id="TraesKARUn01G0087880.1">
    <property type="protein sequence ID" value="cds.TraesKARUn01G0087880.1"/>
    <property type="gene ID" value="TraesKARUn01G0087880"/>
</dbReference>
<dbReference type="Gramene" id="TraesKARUn01G0088110.1">
    <property type="protein sequence ID" value="cds.TraesKARUn01G0088110.1"/>
    <property type="gene ID" value="TraesKARUn01G0088110"/>
</dbReference>
<dbReference type="Gramene" id="TraesKARUn01G0089060.1">
    <property type="protein sequence ID" value="cds.TraesKARUn01G0089060.1"/>
    <property type="gene ID" value="TraesKARUn01G0089060"/>
</dbReference>
<dbReference type="Gramene" id="TraesKARUn01G0090230.1">
    <property type="protein sequence ID" value="cds.TraesKARUn01G0090230.1"/>
    <property type="gene ID" value="TraesKARUn01G0090230"/>
</dbReference>
<dbReference type="Gramene" id="TraesKARUn01G0091310.1">
    <property type="protein sequence ID" value="cds.TraesKARUn01G0091310.1"/>
    <property type="gene ID" value="TraesKARUn01G0091310"/>
</dbReference>
<dbReference type="Gramene" id="TraesKARUn01G0092280.1">
    <property type="protein sequence ID" value="cds.TraesKARUn01G0092280.1"/>
    <property type="gene ID" value="TraesKARUn01G0092280"/>
</dbReference>
<dbReference type="Gramene" id="TraesKARUn01G0094640.1">
    <property type="protein sequence ID" value="cds.TraesKARUn01G0094640.1"/>
    <property type="gene ID" value="TraesKARUn01G0094640"/>
</dbReference>
<dbReference type="Gramene" id="TraesKARUn01G0096440.1">
    <property type="protein sequence ID" value="cds.TraesKARUn01G0096440.1"/>
    <property type="gene ID" value="TraesKARUn01G0096440"/>
</dbReference>
<dbReference type="Gramene" id="TraesKARUn01G0098230.1">
    <property type="protein sequence ID" value="cds.TraesKARUn01G0098230.1"/>
    <property type="gene ID" value="TraesKARUn01G0098230"/>
</dbReference>
<dbReference type="Gramene" id="TraesKARUn01G0100770.1">
    <property type="protein sequence ID" value="cds.TraesKARUn01G0100770.1"/>
    <property type="gene ID" value="TraesKARUn01G0100770"/>
</dbReference>
<dbReference type="Gramene" id="TraesKARUn01G0100980.1">
    <property type="protein sequence ID" value="cds.TraesKARUn01G0100980.1"/>
    <property type="gene ID" value="TraesKARUn01G0100980"/>
</dbReference>
<dbReference type="Gramene" id="TraesKARUn01G0103310.1">
    <property type="protein sequence ID" value="cds.TraesKARUn01G0103310.1"/>
    <property type="gene ID" value="TraesKARUn01G0103310"/>
</dbReference>
<dbReference type="Gramene" id="TraesKARUn01G0103670.1">
    <property type="protein sequence ID" value="cds.TraesKARUn01G0103670.1"/>
    <property type="gene ID" value="TraesKARUn01G0103670"/>
</dbReference>
<dbReference type="Gramene" id="TraesKARUn01G0104790.1">
    <property type="protein sequence ID" value="cds.TraesKARUn01G0104790.1"/>
    <property type="gene ID" value="TraesKARUn01G0104790"/>
</dbReference>
<dbReference type="Gramene" id="TraesKARUn01G0105440.1">
    <property type="protein sequence ID" value="cds.TraesKARUn01G0105440.1"/>
    <property type="gene ID" value="TraesKARUn01G0105440"/>
</dbReference>
<dbReference type="Gramene" id="TraesKARUn01G0105870.1">
    <property type="protein sequence ID" value="cds.TraesKARUn01G0105870.1"/>
    <property type="gene ID" value="TraesKARUn01G0105870"/>
</dbReference>
<dbReference type="Gramene" id="TraesKARUn01G0106490.1">
    <property type="protein sequence ID" value="cds.TraesKARUn01G0106490.1"/>
    <property type="gene ID" value="TraesKARUn01G0106490"/>
</dbReference>
<dbReference type="Gramene" id="TraesKARUn01G0107050.1">
    <property type="protein sequence ID" value="cds.TraesKARUn01G0107050.1"/>
    <property type="gene ID" value="TraesKARUn01G0107050"/>
</dbReference>
<dbReference type="Gramene" id="TraesKARUn01G0107870.1">
    <property type="protein sequence ID" value="cds.TraesKARUn01G0107870.1"/>
    <property type="gene ID" value="TraesKARUn01G0107870"/>
</dbReference>
<dbReference type="Gramene" id="TraesKARUn01G0108520.1">
    <property type="protein sequence ID" value="cds.TraesKARUn01G0108520.1"/>
    <property type="gene ID" value="TraesKARUn01G0108520"/>
</dbReference>
<dbReference type="Gramene" id="TraesKARUn01G0109200.1">
    <property type="protein sequence ID" value="cds.TraesKARUn01G0109200.1"/>
    <property type="gene ID" value="TraesKARUn01G0109200"/>
</dbReference>
<dbReference type="Gramene" id="TraesKARUn01G0109890.1">
    <property type="protein sequence ID" value="cds.TraesKARUn01G0109890.1"/>
    <property type="gene ID" value="TraesKARUn01G0109890"/>
</dbReference>
<dbReference type="Gramene" id="TraesKARUn01G0111480.1">
    <property type="protein sequence ID" value="cds.TraesKARUn01G0111480.1"/>
    <property type="gene ID" value="TraesKARUn01G0111480"/>
</dbReference>
<dbReference type="Gramene" id="TraesKARUn01G0111570.1">
    <property type="protein sequence ID" value="cds.TraesKARUn01G0111570.1"/>
    <property type="gene ID" value="TraesKARUn01G0111570"/>
</dbReference>
<dbReference type="Gramene" id="TraesKARUn01G0111660.1">
    <property type="protein sequence ID" value="cds.TraesKARUn01G0111660.1"/>
    <property type="gene ID" value="TraesKARUn01G0111660"/>
</dbReference>
<dbReference type="Gramene" id="TraesKARUn01G0111860.1">
    <property type="protein sequence ID" value="cds.TraesKARUn01G0111860.1"/>
    <property type="gene ID" value="TraesKARUn01G0111860"/>
</dbReference>
<dbReference type="Gramene" id="TraesKARUn01G0111870.1">
    <property type="protein sequence ID" value="cds.TraesKARUn01G0111870.1"/>
    <property type="gene ID" value="TraesKARUn01G0111870"/>
</dbReference>
<dbReference type="Gramene" id="TraesKARUn01G0112470.1">
    <property type="protein sequence ID" value="cds.TraesKARUn01G0112470.1"/>
    <property type="gene ID" value="TraesKARUn01G0112470"/>
</dbReference>
<dbReference type="Gramene" id="TraesKARUn01G0113940.1">
    <property type="protein sequence ID" value="cds.TraesKARUn01G0113940.1"/>
    <property type="gene ID" value="TraesKARUn01G0113940"/>
</dbReference>
<dbReference type="Gramene" id="TraesKARUn01G0118460.1">
    <property type="protein sequence ID" value="cds.TraesKARUn01G0118460.1"/>
    <property type="gene ID" value="TraesKARUn01G0118460"/>
</dbReference>
<dbReference type="Gramene" id="TraesKARUn01G0119070.1">
    <property type="protein sequence ID" value="cds.TraesKARUn01G0119070.1"/>
    <property type="gene ID" value="TraesKARUn01G0119070"/>
</dbReference>
<dbReference type="Gramene" id="TraesKARUn01G0119810.1">
    <property type="protein sequence ID" value="cds.TraesKARUn01G0119810.1"/>
    <property type="gene ID" value="TraesKARUn01G0119810"/>
</dbReference>
<dbReference type="Gramene" id="TraesKARUn01G0119940.1">
    <property type="protein sequence ID" value="cds.TraesKARUn01G0119940.1"/>
    <property type="gene ID" value="TraesKARUn01G0119940"/>
</dbReference>
<dbReference type="Gramene" id="TraesKARUn01G0120010.1">
    <property type="protein sequence ID" value="cds.TraesKARUn01G0120010.1"/>
    <property type="gene ID" value="TraesKARUn01G0120010"/>
</dbReference>
<dbReference type="Gramene" id="TraesKARUn01G0120290.1">
    <property type="protein sequence ID" value="cds.TraesKARUn01G0120290.1"/>
    <property type="gene ID" value="TraesKARUn01G0120290"/>
</dbReference>
<dbReference type="Gramene" id="TraesKARUn01G0120800.1">
    <property type="protein sequence ID" value="cds.TraesKARUn01G0120800.1"/>
    <property type="gene ID" value="TraesKARUn01G0120800"/>
</dbReference>
<dbReference type="Gramene" id="TraesKARUn01G0121300.1">
    <property type="protein sequence ID" value="cds.TraesKARUn01G0121300.1"/>
    <property type="gene ID" value="TraesKARUn01G0121300"/>
</dbReference>
<dbReference type="Gramene" id="TraesKARUn01G0125990.1">
    <property type="protein sequence ID" value="cds.TraesKARUn01G0125990.1"/>
    <property type="gene ID" value="TraesKARUn01G0125990"/>
</dbReference>
<dbReference type="Gramene" id="TraesKARUn01G0126280.1">
    <property type="protein sequence ID" value="cds.TraesKARUn01G0126280.1"/>
    <property type="gene ID" value="TraesKARUn01G0126280"/>
</dbReference>
<dbReference type="Gramene" id="TraesKARUn01G0127070.1">
    <property type="protein sequence ID" value="cds.TraesKARUn01G0127070.1"/>
    <property type="gene ID" value="TraesKARUn01G0127070"/>
</dbReference>
<dbReference type="Gramene" id="TraesKARUn01G0127590.1">
    <property type="protein sequence ID" value="cds.TraesKARUn01G0127590.1"/>
    <property type="gene ID" value="TraesKARUn01G0127590"/>
</dbReference>
<dbReference type="Gramene" id="TraesKARUn01G0128240.1">
    <property type="protein sequence ID" value="cds.TraesKARUn01G0128240.1"/>
    <property type="gene ID" value="TraesKARUn01G0128240"/>
</dbReference>
<dbReference type="Gramene" id="TraesKARUn01G0129110.1">
    <property type="protein sequence ID" value="cds.TraesKARUn01G0129110.1"/>
    <property type="gene ID" value="TraesKARUn01G0129110"/>
</dbReference>
<dbReference type="Gramene" id="TraesKARUn01G0129680.1">
    <property type="protein sequence ID" value="cds.TraesKARUn01G0129680.1"/>
    <property type="gene ID" value="TraesKARUn01G0129680"/>
</dbReference>
<dbReference type="Gramene" id="TraesKARUn01G0132870.1">
    <property type="protein sequence ID" value="cds.TraesKARUn01G0132870.1"/>
    <property type="gene ID" value="TraesKARUn01G0132870"/>
</dbReference>
<dbReference type="Gramene" id="TraesKARUn01G0135570.1">
    <property type="protein sequence ID" value="cds.TraesKARUn01G0135570.1"/>
    <property type="gene ID" value="TraesKARUn01G0135570"/>
</dbReference>
<dbReference type="Gramene" id="TraesKARUn01G0139180.1">
    <property type="protein sequence ID" value="cds.TraesKARUn01G0139180.1"/>
    <property type="gene ID" value="TraesKARUn01G0139180"/>
</dbReference>
<dbReference type="Gramene" id="TraesKARUn01G0139630.1">
    <property type="protein sequence ID" value="cds.TraesKARUn01G0139630.1"/>
    <property type="gene ID" value="TraesKARUn01G0139630"/>
</dbReference>
<dbReference type="Gramene" id="TraesKARUn01G0140240.1">
    <property type="protein sequence ID" value="cds.TraesKARUn01G0140240.1"/>
    <property type="gene ID" value="TraesKARUn01G0140240"/>
</dbReference>
<dbReference type="Gramene" id="TraesKARUn01G0141540.1">
    <property type="protein sequence ID" value="cds.TraesKARUn01G0141540.1"/>
    <property type="gene ID" value="TraesKARUn01G0141540"/>
</dbReference>
<dbReference type="Gramene" id="TraesKARUn01G0141890.1">
    <property type="protein sequence ID" value="cds.TraesKARUn01G0141890.1"/>
    <property type="gene ID" value="TraesKARUn01G0141890"/>
</dbReference>
<dbReference type="Gramene" id="TraesKARUn01G0142610.1">
    <property type="protein sequence ID" value="cds.TraesKARUn01G0142610.1"/>
    <property type="gene ID" value="TraesKARUn01G0142610"/>
</dbReference>
<dbReference type="Gramene" id="TraesKARUn01G0144300.1">
    <property type="protein sequence ID" value="cds.TraesKARUn01G0144300.1"/>
    <property type="gene ID" value="TraesKARUn01G0144300"/>
</dbReference>
<dbReference type="Gramene" id="TraesKARUn01G0146610.1">
    <property type="protein sequence ID" value="cds.TraesKARUn01G0146610.1"/>
    <property type="gene ID" value="TraesKARUn01G0146610"/>
</dbReference>
<dbReference type="Gramene" id="TraesKARUn01G0147860.1">
    <property type="protein sequence ID" value="cds.TraesKARUn01G0147860.1"/>
    <property type="gene ID" value="TraesKARUn01G0147860"/>
</dbReference>
<dbReference type="Gramene" id="TraesKARUn01G0148890.1">
    <property type="protein sequence ID" value="cds.TraesKARUn01G0148890.1"/>
    <property type="gene ID" value="TraesKARUn01G0148890"/>
</dbReference>
<dbReference type="Gramene" id="TraesKARUn01G0150340.1">
    <property type="protein sequence ID" value="cds.TraesKARUn01G0150340.1"/>
    <property type="gene ID" value="TraesKARUn01G0150340"/>
</dbReference>
<dbReference type="Gramene" id="TraesKARUn01G0150880.1">
    <property type="protein sequence ID" value="cds.TraesKARUn01G0150880.1"/>
    <property type="gene ID" value="TraesKARUn01G0150880"/>
</dbReference>
<dbReference type="Gramene" id="TraesKARUn01G0151630.1">
    <property type="protein sequence ID" value="cds.TraesKARUn01G0151630.1"/>
    <property type="gene ID" value="TraesKARUn01G0151630"/>
</dbReference>
<dbReference type="Gramene" id="TraesKARUn01G0154670.1">
    <property type="protein sequence ID" value="cds.TraesKARUn01G0154670.1"/>
    <property type="gene ID" value="TraesKARUn01G0154670"/>
</dbReference>
<dbReference type="Gramene" id="TraesKARUn01G0154990.1">
    <property type="protein sequence ID" value="cds.TraesKARUn01G0154990.1"/>
    <property type="gene ID" value="TraesKARUn01G0154990"/>
</dbReference>
<dbReference type="Gramene" id="TraesKARUn01G0156590.1">
    <property type="protein sequence ID" value="cds.TraesKARUn01G0156590.1"/>
    <property type="gene ID" value="TraesKARUn01G0156590"/>
</dbReference>
<dbReference type="Gramene" id="TraesKARUn01G0157810.1">
    <property type="protein sequence ID" value="cds.TraesKARUn01G0157810.1"/>
    <property type="gene ID" value="TraesKARUn01G0157810"/>
</dbReference>
<dbReference type="Gramene" id="TraesKARUn01G0158170.1">
    <property type="protein sequence ID" value="cds.TraesKARUn01G0158170.1"/>
    <property type="gene ID" value="TraesKARUn01G0158170"/>
</dbReference>
<dbReference type="Gramene" id="TraesKARUn01G0158980.1">
    <property type="protein sequence ID" value="cds.TraesKARUn01G0158980.1"/>
    <property type="gene ID" value="TraesKARUn01G0158980"/>
</dbReference>
<dbReference type="Gramene" id="TraesKARUn01G0159320.1">
    <property type="protein sequence ID" value="cds.TraesKARUn01G0159320.1"/>
    <property type="gene ID" value="TraesKARUn01G0159320"/>
</dbReference>
<dbReference type="Gramene" id="TraesKARUn01G0160000.1">
    <property type="protein sequence ID" value="cds.TraesKARUn01G0160000.1"/>
    <property type="gene ID" value="TraesKARUn01G0160000"/>
</dbReference>
<dbReference type="Gramene" id="TraesKARUn01G0160720.1">
    <property type="protein sequence ID" value="cds.TraesKARUn01G0160720.1"/>
    <property type="gene ID" value="TraesKARUn01G0160720"/>
</dbReference>
<dbReference type="Gramene" id="TraesKARUn01G0161680.1">
    <property type="protein sequence ID" value="cds.TraesKARUn01G0161680.1"/>
    <property type="gene ID" value="TraesKARUn01G0161680"/>
</dbReference>
<dbReference type="Gramene" id="TraesKARUn01G0162470.1">
    <property type="protein sequence ID" value="cds.TraesKARUn01G0162470.1"/>
    <property type="gene ID" value="TraesKARUn01G0162470"/>
</dbReference>
<dbReference type="Gramene" id="TraesKARUn01G0162820.1">
    <property type="protein sequence ID" value="cds.TraesKARUn01G0162820.1"/>
    <property type="gene ID" value="TraesKARUn01G0162820"/>
</dbReference>
<dbReference type="Gramene" id="TraesKARUn01G0166580.1">
    <property type="protein sequence ID" value="cds.TraesKARUn01G0166580.1"/>
    <property type="gene ID" value="TraesKARUn01G0166580"/>
</dbReference>
<dbReference type="Gramene" id="TraesKARUn01G0167530.1">
    <property type="protein sequence ID" value="cds.TraesKARUn01G0167530.1"/>
    <property type="gene ID" value="TraesKARUn01G0167530"/>
</dbReference>
<dbReference type="Gramene" id="TraesKARUn01G0168880.1">
    <property type="protein sequence ID" value="cds.TraesKARUn01G0168880.1"/>
    <property type="gene ID" value="TraesKARUn01G0168880"/>
</dbReference>
<dbReference type="Gramene" id="TraesKARUn01G0169690.1">
    <property type="protein sequence ID" value="cds.TraesKARUn01G0169690.1"/>
    <property type="gene ID" value="TraesKARUn01G0169690"/>
</dbReference>
<dbReference type="Gramene" id="TraesKARUn01G0170640.1">
    <property type="protein sequence ID" value="cds.TraesKARUn01G0170640.1"/>
    <property type="gene ID" value="TraesKARUn01G0170640"/>
</dbReference>
<dbReference type="Gramene" id="TraesKARUn01G0170750.1">
    <property type="protein sequence ID" value="cds.TraesKARUn01G0170750.1"/>
    <property type="gene ID" value="TraesKARUn01G0170750"/>
</dbReference>
<dbReference type="Gramene" id="TraesKARUn01G0170980.1">
    <property type="protein sequence ID" value="cds.TraesKARUn01G0170980.1"/>
    <property type="gene ID" value="TraesKARUn01G0170980"/>
</dbReference>
<dbReference type="Gramene" id="TraesKARUn01G0172900.1">
    <property type="protein sequence ID" value="cds.TraesKARUn01G0172900.1"/>
    <property type="gene ID" value="TraesKARUn01G0172900"/>
</dbReference>
<dbReference type="Gramene" id="TraesKARUn01G0175390.1">
    <property type="protein sequence ID" value="cds.TraesKARUn01G0175390.1"/>
    <property type="gene ID" value="TraesKARUn01G0175390"/>
</dbReference>
<dbReference type="Gramene" id="TraesKARUn01G0175840.1">
    <property type="protein sequence ID" value="cds.TraesKARUn01G0175840.1"/>
    <property type="gene ID" value="TraesKARUn01G0175840"/>
</dbReference>
<dbReference type="Gramene" id="TraesKARUn01G0176360.1">
    <property type="protein sequence ID" value="cds.TraesKARUn01G0176360.1"/>
    <property type="gene ID" value="TraesKARUn01G0176360"/>
</dbReference>
<dbReference type="Gramene" id="TraesKARUn01G0176710.1">
    <property type="protein sequence ID" value="cds.TraesKARUn01G0176710.1"/>
    <property type="gene ID" value="TraesKARUn01G0176710"/>
</dbReference>
<dbReference type="Gramene" id="TraesKARUn01G0177890.1">
    <property type="protein sequence ID" value="cds.TraesKARUn01G0177890.1"/>
    <property type="gene ID" value="TraesKARUn01G0177890"/>
</dbReference>
<dbReference type="Gramene" id="TraesKARUn01G0178310.1">
    <property type="protein sequence ID" value="cds.TraesKARUn01G0178310.1"/>
    <property type="gene ID" value="TraesKARUn01G0178310"/>
</dbReference>
<dbReference type="Gramene" id="TraesKARUn01G0179320.1">
    <property type="protein sequence ID" value="cds.TraesKARUn01G0179320.1"/>
    <property type="gene ID" value="TraesKARUn01G0179320"/>
</dbReference>
<dbReference type="Gramene" id="TraesKARUn01G0180490.1">
    <property type="protein sequence ID" value="cds.TraesKARUn01G0180490.1"/>
    <property type="gene ID" value="TraesKARUn01G0180490"/>
</dbReference>
<dbReference type="Gramene" id="TraesKARUn01G0180780.1">
    <property type="protein sequence ID" value="cds.TraesKARUn01G0180780.1"/>
    <property type="gene ID" value="TraesKARUn01G0180780"/>
</dbReference>
<dbReference type="Gramene" id="TraesKARUn01G0183340.1">
    <property type="protein sequence ID" value="cds.TraesKARUn01G0183340.1"/>
    <property type="gene ID" value="TraesKARUn01G0183340"/>
</dbReference>
<dbReference type="Gramene" id="TraesKARUn01G0186110.1">
    <property type="protein sequence ID" value="cds.TraesKARUn01G0186110.1"/>
    <property type="gene ID" value="TraesKARUn01G0186110"/>
</dbReference>
<dbReference type="Gramene" id="TraesKARUn01G0187560.1">
    <property type="protein sequence ID" value="cds.TraesKARUn01G0187560.1"/>
    <property type="gene ID" value="TraesKARUn01G0187560"/>
</dbReference>
<dbReference type="Gramene" id="TraesKARUn01G0187740.1">
    <property type="protein sequence ID" value="cds.TraesKARUn01G0187740.1"/>
    <property type="gene ID" value="TraesKARUn01G0187740"/>
</dbReference>
<dbReference type="Gramene" id="TraesKARUn01G0188060.1">
    <property type="protein sequence ID" value="cds.TraesKARUn01G0188060.1"/>
    <property type="gene ID" value="TraesKARUn01G0188060"/>
</dbReference>
<dbReference type="Gramene" id="TraesKARUn01G0188430.1">
    <property type="protein sequence ID" value="cds.TraesKARUn01G0188430.1"/>
    <property type="gene ID" value="TraesKARUn01G0188430"/>
</dbReference>
<dbReference type="Gramene" id="TraesKARUn01G0189120.1">
    <property type="protein sequence ID" value="cds.TraesKARUn01G0189120.1"/>
    <property type="gene ID" value="TraesKARUn01G0189120"/>
</dbReference>
<dbReference type="Gramene" id="TraesKARUn01G0189860.1">
    <property type="protein sequence ID" value="cds.TraesKARUn01G0189860.1"/>
    <property type="gene ID" value="TraesKARUn01G0189860"/>
</dbReference>
<dbReference type="Gramene" id="TraesKARUn01G0191120.1">
    <property type="protein sequence ID" value="cds.TraesKARUn01G0191120.1"/>
    <property type="gene ID" value="TraesKARUn01G0191120"/>
</dbReference>
<dbReference type="Gramene" id="TraesLDM2D03G01293910.1">
    <property type="protein sequence ID" value="TraesLDM2D03G01293910.1.CDS1"/>
    <property type="gene ID" value="TraesLDM2D03G01293910"/>
</dbReference>
<dbReference type="Gramene" id="TraesNOR2D03G01309680.1">
    <property type="protein sequence ID" value="TraesNOR2D03G01309680.1.CDS1"/>
    <property type="gene ID" value="TraesNOR2D03G01309680"/>
</dbReference>
<dbReference type="Gramene" id="TraesNOR7D03G04360980.1">
    <property type="protein sequence ID" value="TraesNOR7D03G04360980.1.CDS1"/>
    <property type="gene ID" value="TraesNOR7D03G04360980"/>
</dbReference>
<dbReference type="Gramene" id="TraesPARA_EIv1.0_2645120.1">
    <property type="protein sequence ID" value="TraesPARA_EIv1.0_2645120.1.CDS1"/>
    <property type="gene ID" value="TraesPARA_EIv1.0_2645120"/>
</dbReference>
<dbReference type="Gramene" id="TraesPARA_EIv1.0_2645270.1">
    <property type="protein sequence ID" value="TraesPARA_EIv1.0_2645270.1.CDS1"/>
    <property type="gene ID" value="TraesPARA_EIv1.0_2645270"/>
</dbReference>
<dbReference type="Gramene" id="TraesPARA_EIv1.0_2645980.1">
    <property type="protein sequence ID" value="TraesPARA_EIv1.0_2645980.1.CDS1"/>
    <property type="gene ID" value="TraesPARA_EIv1.0_2645980"/>
</dbReference>
<dbReference type="Gramene" id="TraesPARA_EIv1.0_2667880.1">
    <property type="protein sequence ID" value="TraesPARA_EIv1.0_2667880.1.CDS1"/>
    <property type="gene ID" value="TraesPARA_EIv1.0_2667880"/>
</dbReference>
<dbReference type="Gramene" id="TraesPARA_EIv1.0_2670990.1">
    <property type="protein sequence ID" value="TraesPARA_EIv1.0_2670990.1.CDS1"/>
    <property type="gene ID" value="TraesPARA_EIv1.0_2670990"/>
</dbReference>
<dbReference type="Gramene" id="TraesPARA_EIv1.0_2671590.1">
    <property type="protein sequence ID" value="TraesPARA_EIv1.0_2671590.1.CDS1"/>
    <property type="gene ID" value="TraesPARA_EIv1.0_2671590"/>
</dbReference>
<dbReference type="Gramene" id="TraesPARA_EIv1.0_2677410.1">
    <property type="protein sequence ID" value="TraesPARA_EIv1.0_2677410.1.CDS1"/>
    <property type="gene ID" value="TraesPARA_EIv1.0_2677410"/>
</dbReference>
<dbReference type="Gramene" id="TraesPARA_EIv1.0_2677630.1">
    <property type="protein sequence ID" value="TraesPARA_EIv1.0_2677630.1.CDS1"/>
    <property type="gene ID" value="TraesPARA_EIv1.0_2677630"/>
</dbReference>
<dbReference type="Gramene" id="TraesPARA_EIv1.0_2679960.1">
    <property type="protein sequence ID" value="TraesPARA_EIv1.0_2679960.1.CDS1"/>
    <property type="gene ID" value="TraesPARA_EIv1.0_2679960"/>
</dbReference>
<dbReference type="Gramene" id="TraesPARA_EIv1.0_2681300.1">
    <property type="protein sequence ID" value="TraesPARA_EIv1.0_2681300.1.CDS1"/>
    <property type="gene ID" value="TraesPARA_EIv1.0_2681300"/>
</dbReference>
<dbReference type="Gramene" id="TraesPARA_EIv1.0_2681390.1">
    <property type="protein sequence ID" value="TraesPARA_EIv1.0_2681390.1.CDS1"/>
    <property type="gene ID" value="TraesPARA_EIv1.0_2681390"/>
</dbReference>
<dbReference type="Gramene" id="TraesPARA_EIv1.0_2681610.1">
    <property type="protein sequence ID" value="TraesPARA_EIv1.0_2681610.1.CDS1"/>
    <property type="gene ID" value="TraesPARA_EIv1.0_2681610"/>
</dbReference>
<dbReference type="KEGG" id="taes:803107"/>
<dbReference type="eggNOG" id="KOG3256">
    <property type="taxonomic scope" value="Eukaryota"/>
</dbReference>
<dbReference type="HOGENOM" id="CLU_122804_0_0_1"/>
<dbReference type="Proteomes" id="UP000019116">
    <property type="component" value="Chloroplast"/>
</dbReference>
<dbReference type="ExpressionAtlas" id="P05312">
    <property type="expression patterns" value="baseline"/>
</dbReference>
<dbReference type="GO" id="GO:0009535">
    <property type="term" value="C:chloroplast thylakoid membrane"/>
    <property type="evidence" value="ECO:0007669"/>
    <property type="project" value="UniProtKB-SubCell"/>
</dbReference>
<dbReference type="GO" id="GO:0051539">
    <property type="term" value="F:4 iron, 4 sulfur cluster binding"/>
    <property type="evidence" value="ECO:0007669"/>
    <property type="project" value="UniProtKB-KW"/>
</dbReference>
<dbReference type="GO" id="GO:0005506">
    <property type="term" value="F:iron ion binding"/>
    <property type="evidence" value="ECO:0007669"/>
    <property type="project" value="UniProtKB-UniRule"/>
</dbReference>
<dbReference type="GO" id="GO:0008137">
    <property type="term" value="F:NADH dehydrogenase (ubiquinone) activity"/>
    <property type="evidence" value="ECO:0007669"/>
    <property type="project" value="InterPro"/>
</dbReference>
<dbReference type="GO" id="GO:0048038">
    <property type="term" value="F:quinone binding"/>
    <property type="evidence" value="ECO:0007669"/>
    <property type="project" value="UniProtKB-KW"/>
</dbReference>
<dbReference type="GO" id="GO:0019684">
    <property type="term" value="P:photosynthesis, light reaction"/>
    <property type="evidence" value="ECO:0007669"/>
    <property type="project" value="UniProtKB-UniRule"/>
</dbReference>
<dbReference type="Gene3D" id="3.30.70.3270">
    <property type="match status" value="1"/>
</dbReference>
<dbReference type="HAMAP" id="MF_01351">
    <property type="entry name" value="NDH1_NuoI"/>
    <property type="match status" value="1"/>
</dbReference>
<dbReference type="InterPro" id="IPR017896">
    <property type="entry name" value="4Fe4S_Fe-S-bd"/>
</dbReference>
<dbReference type="InterPro" id="IPR017900">
    <property type="entry name" value="4Fe4S_Fe_S_CS"/>
</dbReference>
<dbReference type="InterPro" id="IPR010226">
    <property type="entry name" value="NADH_quinone_OxRdtase_chainI"/>
</dbReference>
<dbReference type="InterPro" id="IPR004497">
    <property type="entry name" value="NDHI"/>
</dbReference>
<dbReference type="NCBIfam" id="TIGR00403">
    <property type="entry name" value="ndhI"/>
    <property type="match status" value="1"/>
</dbReference>
<dbReference type="NCBIfam" id="TIGR01971">
    <property type="entry name" value="NuoI"/>
    <property type="match status" value="1"/>
</dbReference>
<dbReference type="NCBIfam" id="NF004537">
    <property type="entry name" value="PRK05888.1-3"/>
    <property type="match status" value="1"/>
</dbReference>
<dbReference type="PANTHER" id="PTHR47275">
    <property type="entry name" value="NAD(P)H-QUINONE OXIDOREDUCTASE SUBUNIT I, CHLOROPLASTIC"/>
    <property type="match status" value="1"/>
</dbReference>
<dbReference type="PANTHER" id="PTHR47275:SF3">
    <property type="entry name" value="NAD(P)H-QUINONE OXIDOREDUCTASE SUBUNIT I, CHLOROPLASTIC"/>
    <property type="match status" value="1"/>
</dbReference>
<dbReference type="Pfam" id="PF12838">
    <property type="entry name" value="Fer4_7"/>
    <property type="match status" value="1"/>
</dbReference>
<dbReference type="SUPFAM" id="SSF54862">
    <property type="entry name" value="4Fe-4S ferredoxins"/>
    <property type="match status" value="1"/>
</dbReference>
<dbReference type="PROSITE" id="PS00198">
    <property type="entry name" value="4FE4S_FER_1"/>
    <property type="match status" value="2"/>
</dbReference>
<dbReference type="PROSITE" id="PS51379">
    <property type="entry name" value="4FE4S_FER_2"/>
    <property type="match status" value="2"/>
</dbReference>
<accession>P05312</accession>
<reference key="1">
    <citation type="journal article" date="1988" name="Nucleic Acids Res.">
        <title>Nucleotide sequence of the frxB gene in wheat chloroplast DNA.</title>
        <authorList>
            <person name="Dunn P.P.J."/>
            <person name="Gray J.C."/>
        </authorList>
    </citation>
    <scope>NUCLEOTIDE SEQUENCE [GENOMIC DNA]</scope>
    <source>
        <strain>cv. Mardler</strain>
    </source>
</reference>
<reference key="2">
    <citation type="journal article" date="2000" name="Plant Mol. Biol. Rep.">
        <title>Chinese spring wheat (Triticum aestivum L.) chloroplast genome: complete sequence and contig clones.</title>
        <authorList>
            <person name="Ogihara Y."/>
            <person name="Isono K."/>
            <person name="Kojima T."/>
            <person name="Endo A."/>
            <person name="Hanaoka M."/>
            <person name="Shiina T."/>
            <person name="Terachi T."/>
            <person name="Utsugi S."/>
            <person name="Murata M."/>
            <person name="Mori N."/>
            <person name="Takumi S."/>
            <person name="Ikeo K."/>
            <person name="Gojobori T."/>
            <person name="Murai R."/>
            <person name="Murai K."/>
            <person name="Matsuoka Y."/>
            <person name="Ohnishi Y."/>
            <person name="Tajiri H."/>
            <person name="Tsunewaki K."/>
        </authorList>
    </citation>
    <scope>NUCLEOTIDE SEQUENCE [LARGE SCALE GENOMIC DNA]</scope>
    <source>
        <strain>cv. Chinese Spring</strain>
    </source>
</reference>
<organism>
    <name type="scientific">Triticum aestivum</name>
    <name type="common">Wheat</name>
    <dbReference type="NCBI Taxonomy" id="4565"/>
    <lineage>
        <taxon>Eukaryota</taxon>
        <taxon>Viridiplantae</taxon>
        <taxon>Streptophyta</taxon>
        <taxon>Embryophyta</taxon>
        <taxon>Tracheophyta</taxon>
        <taxon>Spermatophyta</taxon>
        <taxon>Magnoliopsida</taxon>
        <taxon>Liliopsida</taxon>
        <taxon>Poales</taxon>
        <taxon>Poaceae</taxon>
        <taxon>BOP clade</taxon>
        <taxon>Pooideae</taxon>
        <taxon>Triticodae</taxon>
        <taxon>Triticeae</taxon>
        <taxon>Triticinae</taxon>
        <taxon>Triticum</taxon>
    </lineage>
</organism>
<gene>
    <name evidence="1" type="primary">ndhI</name>
    <name type="synonym">frxB</name>
</gene>